<comment type="function">
    <text evidence="1">Catalyzes the conversion of (8S)-3',8-cyclo-7,8-dihydroguanosine 5'-triphosphate to cyclic pyranopterin monophosphate (cPMP).</text>
</comment>
<comment type="catalytic activity">
    <reaction evidence="1">
        <text>(8S)-3',8-cyclo-7,8-dihydroguanosine 5'-triphosphate = cyclic pyranopterin phosphate + diphosphate</text>
        <dbReference type="Rhea" id="RHEA:49580"/>
        <dbReference type="ChEBI" id="CHEBI:33019"/>
        <dbReference type="ChEBI" id="CHEBI:59648"/>
        <dbReference type="ChEBI" id="CHEBI:131766"/>
        <dbReference type="EC" id="4.6.1.17"/>
    </reaction>
</comment>
<comment type="pathway">
    <text evidence="1">Cofactor biosynthesis; molybdopterin biosynthesis.</text>
</comment>
<comment type="subunit">
    <text evidence="1">Homohexamer; trimer of dimers.</text>
</comment>
<comment type="similarity">
    <text evidence="1">Belongs to the MoaC family.</text>
</comment>
<proteinExistence type="inferred from homology"/>
<accession>A5F2Q7</accession>
<accession>C3LZ36</accession>
<sequence length="160" mass="17340">MMSQLTHINASGEANMVDVSNKADTVREARAEAYVRMAPETLQLILSGQHHKGDVFATARIAGIQAAKRTWELIPLCHPLLLSKVEVQLEALPEQSSVRIESLCKLSGKTGVEMEALTAASVAALTIYDMCKAVQKDIVIENVRLLEKSGGKSGHFKVDA</sequence>
<protein>
    <recommendedName>
        <fullName evidence="1">Cyclic pyranopterin monophosphate synthase</fullName>
        <ecNumber evidence="1">4.6.1.17</ecNumber>
    </recommendedName>
    <alternativeName>
        <fullName evidence="1">Molybdenum cofactor biosynthesis protein C</fullName>
    </alternativeName>
</protein>
<name>MOAC_VIBC3</name>
<evidence type="ECO:0000255" key="1">
    <source>
        <dbReference type="HAMAP-Rule" id="MF_01224"/>
    </source>
</evidence>
<keyword id="KW-0456">Lyase</keyword>
<keyword id="KW-0501">Molybdenum cofactor biosynthesis</keyword>
<organism>
    <name type="scientific">Vibrio cholerae serotype O1 (strain ATCC 39541 / Classical Ogawa 395 / O395)</name>
    <dbReference type="NCBI Taxonomy" id="345073"/>
    <lineage>
        <taxon>Bacteria</taxon>
        <taxon>Pseudomonadati</taxon>
        <taxon>Pseudomonadota</taxon>
        <taxon>Gammaproteobacteria</taxon>
        <taxon>Vibrionales</taxon>
        <taxon>Vibrionaceae</taxon>
        <taxon>Vibrio</taxon>
    </lineage>
</organism>
<reference key="1">
    <citation type="submission" date="2007-03" db="EMBL/GenBank/DDBJ databases">
        <authorList>
            <person name="Heidelberg J."/>
        </authorList>
    </citation>
    <scope>NUCLEOTIDE SEQUENCE [LARGE SCALE GENOMIC DNA]</scope>
    <source>
        <strain>ATCC 39541 / Classical Ogawa 395 / O395</strain>
    </source>
</reference>
<reference key="2">
    <citation type="journal article" date="2008" name="PLoS ONE">
        <title>A recalibrated molecular clock and independent origins for the cholera pandemic clones.</title>
        <authorList>
            <person name="Feng L."/>
            <person name="Reeves P.R."/>
            <person name="Lan R."/>
            <person name="Ren Y."/>
            <person name="Gao C."/>
            <person name="Zhou Z."/>
            <person name="Ren Y."/>
            <person name="Cheng J."/>
            <person name="Wang W."/>
            <person name="Wang J."/>
            <person name="Qian W."/>
            <person name="Li D."/>
            <person name="Wang L."/>
        </authorList>
    </citation>
    <scope>NUCLEOTIDE SEQUENCE [LARGE SCALE GENOMIC DNA]</scope>
    <source>
        <strain>ATCC 39541 / Classical Ogawa 395 / O395</strain>
    </source>
</reference>
<feature type="chain" id="PRO_1000073161" description="Cyclic pyranopterin monophosphate synthase">
    <location>
        <begin position="1"/>
        <end position="160"/>
    </location>
</feature>
<feature type="active site" evidence="1">
    <location>
        <position position="129"/>
    </location>
</feature>
<feature type="binding site" evidence="1">
    <location>
        <begin position="76"/>
        <end position="78"/>
    </location>
    <ligand>
        <name>substrate</name>
    </ligand>
</feature>
<feature type="binding site" evidence="1">
    <location>
        <begin position="114"/>
        <end position="115"/>
    </location>
    <ligand>
        <name>substrate</name>
    </ligand>
</feature>
<gene>
    <name evidence="1" type="primary">moaC</name>
    <name type="ordered locus">VC0395_A0546</name>
    <name type="ordered locus">VC395_1040</name>
</gene>
<dbReference type="EC" id="4.6.1.17" evidence="1"/>
<dbReference type="EMBL" id="CP000627">
    <property type="protein sequence ID" value="ABQ22040.1"/>
    <property type="molecule type" value="Genomic_DNA"/>
</dbReference>
<dbReference type="EMBL" id="CP001235">
    <property type="protein sequence ID" value="ACP09052.1"/>
    <property type="molecule type" value="Genomic_DNA"/>
</dbReference>
<dbReference type="SMR" id="A5F2Q7"/>
<dbReference type="KEGG" id="vco:VC0395_A0546"/>
<dbReference type="KEGG" id="vcr:VC395_1040"/>
<dbReference type="PATRIC" id="fig|345073.21.peg.1010"/>
<dbReference type="eggNOG" id="COG0315">
    <property type="taxonomic scope" value="Bacteria"/>
</dbReference>
<dbReference type="HOGENOM" id="CLU_074693_1_1_6"/>
<dbReference type="UniPathway" id="UPA00344"/>
<dbReference type="Proteomes" id="UP000000249">
    <property type="component" value="Chromosome 2"/>
</dbReference>
<dbReference type="GO" id="GO:0061799">
    <property type="term" value="F:cyclic pyranopterin monophosphate synthase activity"/>
    <property type="evidence" value="ECO:0007669"/>
    <property type="project" value="UniProtKB-UniRule"/>
</dbReference>
<dbReference type="GO" id="GO:0061798">
    <property type="term" value="F:GTP 3',8'-cyclase activity"/>
    <property type="evidence" value="ECO:0007669"/>
    <property type="project" value="TreeGrafter"/>
</dbReference>
<dbReference type="GO" id="GO:0006777">
    <property type="term" value="P:Mo-molybdopterin cofactor biosynthetic process"/>
    <property type="evidence" value="ECO:0007669"/>
    <property type="project" value="UniProtKB-UniRule"/>
</dbReference>
<dbReference type="CDD" id="cd01420">
    <property type="entry name" value="MoaC_PE"/>
    <property type="match status" value="1"/>
</dbReference>
<dbReference type="FunFam" id="3.30.70.640:FF:000001">
    <property type="entry name" value="Cyclic pyranopterin monophosphate synthase"/>
    <property type="match status" value="1"/>
</dbReference>
<dbReference type="Gene3D" id="3.30.70.640">
    <property type="entry name" value="Molybdopterin cofactor biosynthesis C (MoaC) domain"/>
    <property type="match status" value="1"/>
</dbReference>
<dbReference type="HAMAP" id="MF_01224_B">
    <property type="entry name" value="MoaC_B"/>
    <property type="match status" value="1"/>
</dbReference>
<dbReference type="InterPro" id="IPR023045">
    <property type="entry name" value="MoaC"/>
</dbReference>
<dbReference type="InterPro" id="IPR047594">
    <property type="entry name" value="MoaC_bact/euk"/>
</dbReference>
<dbReference type="InterPro" id="IPR036522">
    <property type="entry name" value="MoaC_sf"/>
</dbReference>
<dbReference type="InterPro" id="IPR050105">
    <property type="entry name" value="MoCo_biosynth_MoaA/MoaC"/>
</dbReference>
<dbReference type="InterPro" id="IPR002820">
    <property type="entry name" value="Mopterin_CF_biosynth-C_dom"/>
</dbReference>
<dbReference type="NCBIfam" id="TIGR00581">
    <property type="entry name" value="moaC"/>
    <property type="match status" value="1"/>
</dbReference>
<dbReference type="NCBIfam" id="NF006870">
    <property type="entry name" value="PRK09364.1"/>
    <property type="match status" value="1"/>
</dbReference>
<dbReference type="PANTHER" id="PTHR22960:SF0">
    <property type="entry name" value="MOLYBDENUM COFACTOR BIOSYNTHESIS PROTEIN 1"/>
    <property type="match status" value="1"/>
</dbReference>
<dbReference type="PANTHER" id="PTHR22960">
    <property type="entry name" value="MOLYBDOPTERIN COFACTOR SYNTHESIS PROTEIN A"/>
    <property type="match status" value="1"/>
</dbReference>
<dbReference type="Pfam" id="PF01967">
    <property type="entry name" value="MoaC"/>
    <property type="match status" value="1"/>
</dbReference>
<dbReference type="SUPFAM" id="SSF55040">
    <property type="entry name" value="Molybdenum cofactor biosynthesis protein C, MoaC"/>
    <property type="match status" value="1"/>
</dbReference>